<gene>
    <name evidence="1" type="primary">thyA</name>
    <name type="ordered locus">KPN78578_31730</name>
    <name type="ORF">KPN_03236</name>
</gene>
<organism>
    <name type="scientific">Klebsiella pneumoniae subsp. pneumoniae (strain ATCC 700721 / MGH 78578)</name>
    <dbReference type="NCBI Taxonomy" id="272620"/>
    <lineage>
        <taxon>Bacteria</taxon>
        <taxon>Pseudomonadati</taxon>
        <taxon>Pseudomonadota</taxon>
        <taxon>Gammaproteobacteria</taxon>
        <taxon>Enterobacterales</taxon>
        <taxon>Enterobacteriaceae</taxon>
        <taxon>Klebsiella/Raoultella group</taxon>
        <taxon>Klebsiella</taxon>
        <taxon>Klebsiella pneumoniae complex</taxon>
    </lineage>
</organism>
<sequence>MKQYLDLMQKVLTEGTPKNDRTGTGTISIFGHQMRFNLQEGFPLVTTKRCHLRSIIHELLWFLQGDTNIAYLHENNVTIWDEWADENGDLGPVYGKQWRSWPAPDGRHIDQITTVMNQLKNDPDSRRIIVSAWNVGELDKMALAPCHAFFQFYVADGKLSCQLYQRSCDVFLGLPFNIASYALLVHMVAQQCDLQVGDFVWTGGDTHLYSNHLEQTNLQLSREPRPLPKLVIKRKPASIFDYRFEDFEIEGYDPHPGIKAPVAI</sequence>
<name>TYSY_KLEP7</name>
<comment type="function">
    <text evidence="1">Catalyzes the reductive methylation of 2'-deoxyuridine-5'-monophosphate (dUMP) to 2'-deoxythymidine-5'-monophosphate (dTMP) while utilizing 5,10-methylenetetrahydrofolate (mTHF) as the methyl donor and reductant in the reaction, yielding dihydrofolate (DHF) as a by-product. This enzymatic reaction provides an intracellular de novo source of dTMP, an essential precursor for DNA biosynthesis.</text>
</comment>
<comment type="catalytic activity">
    <reaction evidence="1">
        <text>dUMP + (6R)-5,10-methylene-5,6,7,8-tetrahydrofolate = 7,8-dihydrofolate + dTMP</text>
        <dbReference type="Rhea" id="RHEA:12104"/>
        <dbReference type="ChEBI" id="CHEBI:15636"/>
        <dbReference type="ChEBI" id="CHEBI:57451"/>
        <dbReference type="ChEBI" id="CHEBI:63528"/>
        <dbReference type="ChEBI" id="CHEBI:246422"/>
        <dbReference type="EC" id="2.1.1.45"/>
    </reaction>
</comment>
<comment type="pathway">
    <text evidence="1">Pyrimidine metabolism; dTTP biosynthesis.</text>
</comment>
<comment type="subunit">
    <text evidence="1">Homodimer.</text>
</comment>
<comment type="subcellular location">
    <subcellularLocation>
        <location evidence="1">Cytoplasm</location>
    </subcellularLocation>
</comment>
<comment type="similarity">
    <text evidence="1">Belongs to the thymidylate synthase family. Bacterial-type ThyA subfamily.</text>
</comment>
<accession>A6TDG3</accession>
<evidence type="ECO:0000255" key="1">
    <source>
        <dbReference type="HAMAP-Rule" id="MF_00008"/>
    </source>
</evidence>
<keyword id="KW-0963">Cytoplasm</keyword>
<keyword id="KW-0489">Methyltransferase</keyword>
<keyword id="KW-0545">Nucleotide biosynthesis</keyword>
<keyword id="KW-0808">Transferase</keyword>
<proteinExistence type="inferred from homology"/>
<feature type="chain" id="PRO_1000000611" description="Thymidylate synthase">
    <location>
        <begin position="1"/>
        <end position="264"/>
    </location>
</feature>
<feature type="active site" description="Nucleophile" evidence="1">
    <location>
        <position position="146"/>
    </location>
</feature>
<feature type="binding site" description="in other chain" evidence="1">
    <location>
        <position position="21"/>
    </location>
    <ligand>
        <name>dUMP</name>
        <dbReference type="ChEBI" id="CHEBI:246422"/>
        <note>ligand shared between dimeric partners</note>
    </ligand>
</feature>
<feature type="binding site" evidence="1">
    <location>
        <position position="51"/>
    </location>
    <ligand>
        <name>(6R)-5,10-methylene-5,6,7,8-tetrahydrofolate</name>
        <dbReference type="ChEBI" id="CHEBI:15636"/>
    </ligand>
</feature>
<feature type="binding site" evidence="1">
    <location>
        <begin position="126"/>
        <end position="127"/>
    </location>
    <ligand>
        <name>dUMP</name>
        <dbReference type="ChEBI" id="CHEBI:246422"/>
        <note>ligand shared between dimeric partners</note>
    </ligand>
</feature>
<feature type="binding site" description="in other chain" evidence="1">
    <location>
        <begin position="166"/>
        <end position="169"/>
    </location>
    <ligand>
        <name>dUMP</name>
        <dbReference type="ChEBI" id="CHEBI:246422"/>
        <note>ligand shared between dimeric partners</note>
    </ligand>
</feature>
<feature type="binding site" evidence="1">
    <location>
        <position position="169"/>
    </location>
    <ligand>
        <name>(6R)-5,10-methylene-5,6,7,8-tetrahydrofolate</name>
        <dbReference type="ChEBI" id="CHEBI:15636"/>
    </ligand>
</feature>
<feature type="binding site" description="in other chain" evidence="1">
    <location>
        <position position="177"/>
    </location>
    <ligand>
        <name>dUMP</name>
        <dbReference type="ChEBI" id="CHEBI:246422"/>
        <note>ligand shared between dimeric partners</note>
    </ligand>
</feature>
<feature type="binding site" description="in other chain" evidence="1">
    <location>
        <begin position="207"/>
        <end position="209"/>
    </location>
    <ligand>
        <name>dUMP</name>
        <dbReference type="ChEBI" id="CHEBI:246422"/>
        <note>ligand shared between dimeric partners</note>
    </ligand>
</feature>
<feature type="binding site" evidence="1">
    <location>
        <position position="263"/>
    </location>
    <ligand>
        <name>(6R)-5,10-methylene-5,6,7,8-tetrahydrofolate</name>
        <dbReference type="ChEBI" id="CHEBI:15636"/>
    </ligand>
</feature>
<protein>
    <recommendedName>
        <fullName evidence="1">Thymidylate synthase</fullName>
        <shortName evidence="1">TS</shortName>
        <shortName evidence="1">TSase</shortName>
        <ecNumber evidence="1">2.1.1.45</ecNumber>
    </recommendedName>
</protein>
<dbReference type="EC" id="2.1.1.45" evidence="1"/>
<dbReference type="EMBL" id="CP000647">
    <property type="protein sequence ID" value="ABR78634.1"/>
    <property type="molecule type" value="Genomic_DNA"/>
</dbReference>
<dbReference type="RefSeq" id="WP_015958927.1">
    <property type="nucleotide sequence ID" value="NC_009648.1"/>
</dbReference>
<dbReference type="SMR" id="A6TDG3"/>
<dbReference type="STRING" id="272620.KPN_03236"/>
<dbReference type="PaxDb" id="272620-KPN_03236"/>
<dbReference type="EnsemblBacteria" id="ABR78634">
    <property type="protein sequence ID" value="ABR78634"/>
    <property type="gene ID" value="KPN_03236"/>
</dbReference>
<dbReference type="GeneID" id="69753645"/>
<dbReference type="KEGG" id="kpn:KPN_03236"/>
<dbReference type="HOGENOM" id="CLU_021669_0_0_6"/>
<dbReference type="UniPathway" id="UPA00575"/>
<dbReference type="Proteomes" id="UP000000265">
    <property type="component" value="Chromosome"/>
</dbReference>
<dbReference type="GO" id="GO:0005829">
    <property type="term" value="C:cytosol"/>
    <property type="evidence" value="ECO:0007669"/>
    <property type="project" value="TreeGrafter"/>
</dbReference>
<dbReference type="GO" id="GO:0004799">
    <property type="term" value="F:thymidylate synthase activity"/>
    <property type="evidence" value="ECO:0007669"/>
    <property type="project" value="UniProtKB-UniRule"/>
</dbReference>
<dbReference type="GO" id="GO:0006231">
    <property type="term" value="P:dTMP biosynthetic process"/>
    <property type="evidence" value="ECO:0007669"/>
    <property type="project" value="UniProtKB-UniRule"/>
</dbReference>
<dbReference type="GO" id="GO:0006235">
    <property type="term" value="P:dTTP biosynthetic process"/>
    <property type="evidence" value="ECO:0007669"/>
    <property type="project" value="UniProtKB-UniRule"/>
</dbReference>
<dbReference type="GO" id="GO:0032259">
    <property type="term" value="P:methylation"/>
    <property type="evidence" value="ECO:0007669"/>
    <property type="project" value="UniProtKB-KW"/>
</dbReference>
<dbReference type="CDD" id="cd00351">
    <property type="entry name" value="TS_Pyrimidine_HMase"/>
    <property type="match status" value="1"/>
</dbReference>
<dbReference type="FunFam" id="3.30.572.10:FF:000001">
    <property type="entry name" value="Thymidylate synthase"/>
    <property type="match status" value="1"/>
</dbReference>
<dbReference type="Gene3D" id="3.30.572.10">
    <property type="entry name" value="Thymidylate synthase/dCMP hydroxymethylase domain"/>
    <property type="match status" value="1"/>
</dbReference>
<dbReference type="HAMAP" id="MF_00008">
    <property type="entry name" value="Thymidy_synth_bact"/>
    <property type="match status" value="1"/>
</dbReference>
<dbReference type="InterPro" id="IPR045097">
    <property type="entry name" value="Thymidate_synth/dCMP_Mease"/>
</dbReference>
<dbReference type="InterPro" id="IPR023451">
    <property type="entry name" value="Thymidate_synth/dCMP_Mease_dom"/>
</dbReference>
<dbReference type="InterPro" id="IPR036926">
    <property type="entry name" value="Thymidate_synth/dCMP_Mease_sf"/>
</dbReference>
<dbReference type="InterPro" id="IPR000398">
    <property type="entry name" value="Thymidylate_synthase"/>
</dbReference>
<dbReference type="InterPro" id="IPR020940">
    <property type="entry name" value="Thymidylate_synthase_AS"/>
</dbReference>
<dbReference type="NCBIfam" id="NF002497">
    <property type="entry name" value="PRK01827.1-3"/>
    <property type="match status" value="1"/>
</dbReference>
<dbReference type="NCBIfam" id="NF002499">
    <property type="entry name" value="PRK01827.1-5"/>
    <property type="match status" value="1"/>
</dbReference>
<dbReference type="NCBIfam" id="TIGR03284">
    <property type="entry name" value="thym_sym"/>
    <property type="match status" value="2"/>
</dbReference>
<dbReference type="PANTHER" id="PTHR11548:SF9">
    <property type="entry name" value="THYMIDYLATE SYNTHASE"/>
    <property type="match status" value="1"/>
</dbReference>
<dbReference type="PANTHER" id="PTHR11548">
    <property type="entry name" value="THYMIDYLATE SYNTHASE 1"/>
    <property type="match status" value="1"/>
</dbReference>
<dbReference type="Pfam" id="PF00303">
    <property type="entry name" value="Thymidylat_synt"/>
    <property type="match status" value="1"/>
</dbReference>
<dbReference type="PRINTS" id="PR00108">
    <property type="entry name" value="THYMDSNTHASE"/>
</dbReference>
<dbReference type="SUPFAM" id="SSF55831">
    <property type="entry name" value="Thymidylate synthase/dCMP hydroxymethylase"/>
    <property type="match status" value="1"/>
</dbReference>
<dbReference type="PROSITE" id="PS00091">
    <property type="entry name" value="THYMIDYLATE_SYNTHASE"/>
    <property type="match status" value="1"/>
</dbReference>
<reference key="1">
    <citation type="submission" date="2006-09" db="EMBL/GenBank/DDBJ databases">
        <authorList>
            <consortium name="The Klebsiella pneumonia Genome Sequencing Project"/>
            <person name="McClelland M."/>
            <person name="Sanderson E.K."/>
            <person name="Spieth J."/>
            <person name="Clifton W.S."/>
            <person name="Latreille P."/>
            <person name="Sabo A."/>
            <person name="Pepin K."/>
            <person name="Bhonagiri V."/>
            <person name="Porwollik S."/>
            <person name="Ali J."/>
            <person name="Wilson R.K."/>
        </authorList>
    </citation>
    <scope>NUCLEOTIDE SEQUENCE [LARGE SCALE GENOMIC DNA]</scope>
    <source>
        <strain>ATCC 700721 / MGH 78578</strain>
    </source>
</reference>